<reference key="1">
    <citation type="journal article" date="2007" name="J. Bacteriol.">
        <title>Genome sequence of Avery's virulent serotype 2 strain D39 of Streptococcus pneumoniae and comparison with that of unencapsulated laboratory strain R6.</title>
        <authorList>
            <person name="Lanie J.A."/>
            <person name="Ng W.-L."/>
            <person name="Kazmierczak K.M."/>
            <person name="Andrzejewski T.M."/>
            <person name="Davidsen T.M."/>
            <person name="Wayne K.J."/>
            <person name="Tettelin H."/>
            <person name="Glass J.I."/>
            <person name="Winkler M.E."/>
        </authorList>
    </citation>
    <scope>NUCLEOTIDE SEQUENCE [LARGE SCALE GENOMIC DNA]</scope>
    <source>
        <strain>D39 / NCTC 7466</strain>
    </source>
</reference>
<gene>
    <name evidence="1" type="primary">tmcAL</name>
    <name type="ordered locus">SPD_1552</name>
</gene>
<comment type="function">
    <text evidence="1">Catalyzes the formation of N(4)-acetylcytidine (ac(4)C) at the wobble position of elongator tRNA(Met), using acetate and ATP as substrates. First activates an acetate ion to form acetyladenylate (Ac-AMP) and then transfers the acetyl group to tRNA to form ac(4)C34.</text>
</comment>
<comment type="catalytic activity">
    <reaction evidence="1">
        <text>cytidine(34) in elongator tRNA(Met) + acetate + ATP = N(4)-acetylcytidine(34) in elongator tRNA(Met) + AMP + diphosphate</text>
        <dbReference type="Rhea" id="RHEA:58144"/>
        <dbReference type="Rhea" id="RHEA-COMP:10693"/>
        <dbReference type="Rhea" id="RHEA-COMP:10694"/>
        <dbReference type="ChEBI" id="CHEBI:30089"/>
        <dbReference type="ChEBI" id="CHEBI:30616"/>
        <dbReference type="ChEBI" id="CHEBI:33019"/>
        <dbReference type="ChEBI" id="CHEBI:74900"/>
        <dbReference type="ChEBI" id="CHEBI:82748"/>
        <dbReference type="ChEBI" id="CHEBI:456215"/>
    </reaction>
</comment>
<comment type="subcellular location">
    <subcellularLocation>
        <location evidence="1">Cytoplasm</location>
    </subcellularLocation>
</comment>
<comment type="similarity">
    <text evidence="1">Belongs to the TmcAL family.</text>
</comment>
<protein>
    <recommendedName>
        <fullName evidence="1">tRNA(Met) cytidine acetate ligase</fullName>
        <ecNumber evidence="1">6.3.4.-</ecNumber>
    </recommendedName>
</protein>
<organism>
    <name type="scientific">Streptococcus pneumoniae serotype 2 (strain D39 / NCTC 7466)</name>
    <dbReference type="NCBI Taxonomy" id="373153"/>
    <lineage>
        <taxon>Bacteria</taxon>
        <taxon>Bacillati</taxon>
        <taxon>Bacillota</taxon>
        <taxon>Bacilli</taxon>
        <taxon>Lactobacillales</taxon>
        <taxon>Streptococcaceae</taxon>
        <taxon>Streptococcus</taxon>
    </lineage>
</organism>
<evidence type="ECO:0000255" key="1">
    <source>
        <dbReference type="HAMAP-Rule" id="MF_01539"/>
    </source>
</evidence>
<feature type="chain" id="PRO_0000300193" description="tRNA(Met) cytidine acetate ligase">
    <location>
        <begin position="1"/>
        <end position="365"/>
    </location>
</feature>
<feature type="binding site" evidence="1">
    <location>
        <begin position="7"/>
        <end position="20"/>
    </location>
    <ligand>
        <name>ATP</name>
        <dbReference type="ChEBI" id="CHEBI:30616"/>
    </ligand>
</feature>
<feature type="binding site" evidence="1">
    <location>
        <position position="96"/>
    </location>
    <ligand>
        <name>ATP</name>
        <dbReference type="ChEBI" id="CHEBI:30616"/>
    </ligand>
</feature>
<feature type="binding site" evidence="1">
    <location>
        <position position="152"/>
    </location>
    <ligand>
        <name>ATP</name>
        <dbReference type="ChEBI" id="CHEBI:30616"/>
    </ligand>
</feature>
<feature type="binding site" evidence="1">
    <location>
        <position position="175"/>
    </location>
    <ligand>
        <name>ATP</name>
        <dbReference type="ChEBI" id="CHEBI:30616"/>
    </ligand>
</feature>
<proteinExistence type="inferred from homology"/>
<dbReference type="EC" id="6.3.4.-" evidence="1"/>
<dbReference type="EMBL" id="CP000410">
    <property type="protein sequence ID" value="ABJ54378.1"/>
    <property type="molecule type" value="Genomic_DNA"/>
</dbReference>
<dbReference type="RefSeq" id="WP_000156355.1">
    <property type="nucleotide sequence ID" value="NZ_JAMLJR010000003.1"/>
</dbReference>
<dbReference type="SMR" id="Q04J33"/>
<dbReference type="PaxDb" id="373153-SPD_1552"/>
<dbReference type="KEGG" id="spd:SPD_1552"/>
<dbReference type="eggNOG" id="COG1323">
    <property type="taxonomic scope" value="Bacteria"/>
</dbReference>
<dbReference type="HOGENOM" id="CLU_038915_0_2_9"/>
<dbReference type="BioCyc" id="SPNE373153:G1G6V-1675-MONOMER"/>
<dbReference type="Proteomes" id="UP000001452">
    <property type="component" value="Chromosome"/>
</dbReference>
<dbReference type="GO" id="GO:0005737">
    <property type="term" value="C:cytoplasm"/>
    <property type="evidence" value="ECO:0007669"/>
    <property type="project" value="UniProtKB-SubCell"/>
</dbReference>
<dbReference type="GO" id="GO:0005524">
    <property type="term" value="F:ATP binding"/>
    <property type="evidence" value="ECO:0007669"/>
    <property type="project" value="UniProtKB-KW"/>
</dbReference>
<dbReference type="GO" id="GO:0016879">
    <property type="term" value="F:ligase activity, forming carbon-nitrogen bonds"/>
    <property type="evidence" value="ECO:0007669"/>
    <property type="project" value="UniProtKB-UniRule"/>
</dbReference>
<dbReference type="GO" id="GO:0000049">
    <property type="term" value="F:tRNA binding"/>
    <property type="evidence" value="ECO:0007669"/>
    <property type="project" value="UniProtKB-KW"/>
</dbReference>
<dbReference type="GO" id="GO:0006400">
    <property type="term" value="P:tRNA modification"/>
    <property type="evidence" value="ECO:0007669"/>
    <property type="project" value="UniProtKB-UniRule"/>
</dbReference>
<dbReference type="Gene3D" id="3.40.50.620">
    <property type="entry name" value="HUPs"/>
    <property type="match status" value="1"/>
</dbReference>
<dbReference type="HAMAP" id="MF_01539">
    <property type="entry name" value="TmcAL"/>
    <property type="match status" value="1"/>
</dbReference>
<dbReference type="InterPro" id="IPR014729">
    <property type="entry name" value="Rossmann-like_a/b/a_fold"/>
</dbReference>
<dbReference type="InterPro" id="IPR008513">
    <property type="entry name" value="tRNA(Met)_cyd_acetate_ligase"/>
</dbReference>
<dbReference type="NCBIfam" id="NF010191">
    <property type="entry name" value="PRK13670.1"/>
    <property type="match status" value="1"/>
</dbReference>
<dbReference type="PANTHER" id="PTHR37825">
    <property type="entry name" value="TRNA(MET) CYTIDINE ACETATE LIGASE"/>
    <property type="match status" value="1"/>
</dbReference>
<dbReference type="PANTHER" id="PTHR37825:SF1">
    <property type="entry name" value="TRNA(MET) CYTIDINE ACETATE LIGASE"/>
    <property type="match status" value="1"/>
</dbReference>
<dbReference type="Pfam" id="PF05636">
    <property type="entry name" value="HIGH_NTase1"/>
    <property type="match status" value="1"/>
</dbReference>
<dbReference type="SUPFAM" id="SSF52374">
    <property type="entry name" value="Nucleotidylyl transferase"/>
    <property type="match status" value="1"/>
</dbReference>
<sequence length="365" mass="41224">MTITGIIAEFNPFHNGHKYLLDQAEGLKIVAMSGNFMQRGEPAIVDKWTRAQMALENGADLVVELPFLVSVQAADFFGQGSVDILDRLGIDSLAFGTEEVLDYQKIADLYTEKGAEMEKFVKNLPDSLSYPQKTQAMWKEFAGLDFSGNTPNHVLALAYAKAVAGRNIKLHPIQRQGAGYHSVNKDVDFASATALRQHQKDQDFLERFMPSVALFEQASKVIWEDYFPLLRYQILSNPDLTTIYQVNQEMAVRIKEAIKTAQSVEELVELVTTKRYTKARVRRLLTYILMQARESDLPEAIHVLGFTEKGRQHLKSLKGQVSLVSRIGKEPWDAMTQKVDQIYQLGKPSIAEQNFGRVPIRIETN</sequence>
<accession>Q04J33</accession>
<name>TMCAL_STRP2</name>
<keyword id="KW-0067">ATP-binding</keyword>
<keyword id="KW-0963">Cytoplasm</keyword>
<keyword id="KW-0436">Ligase</keyword>
<keyword id="KW-0547">Nucleotide-binding</keyword>
<keyword id="KW-1185">Reference proteome</keyword>
<keyword id="KW-0694">RNA-binding</keyword>
<keyword id="KW-0819">tRNA processing</keyword>
<keyword id="KW-0820">tRNA-binding</keyword>